<organism>
    <name type="scientific">Staphylococcus aureus (strain NCTC 8325 / PS 47)</name>
    <dbReference type="NCBI Taxonomy" id="93061"/>
    <lineage>
        <taxon>Bacteria</taxon>
        <taxon>Bacillati</taxon>
        <taxon>Bacillota</taxon>
        <taxon>Bacilli</taxon>
        <taxon>Bacillales</taxon>
        <taxon>Staphylococcaceae</taxon>
        <taxon>Staphylococcus</taxon>
    </lineage>
</organism>
<evidence type="ECO:0000255" key="1">
    <source>
        <dbReference type="HAMAP-Rule" id="MF_01318"/>
    </source>
</evidence>
<evidence type="ECO:0000305" key="2"/>
<accession>Q2G0P0</accession>
<dbReference type="EMBL" id="CP000253">
    <property type="protein sequence ID" value="ABD29668.1"/>
    <property type="molecule type" value="Genomic_DNA"/>
</dbReference>
<dbReference type="RefSeq" id="WP_001074619.1">
    <property type="nucleotide sequence ID" value="NZ_LS483365.1"/>
</dbReference>
<dbReference type="RefSeq" id="YP_499092.1">
    <property type="nucleotide sequence ID" value="NC_007795.1"/>
</dbReference>
<dbReference type="SMR" id="Q2G0P0"/>
<dbReference type="STRING" id="93061.SAOUHSC_00519"/>
<dbReference type="DrugBank" id="DB01190">
    <property type="generic name" value="Clindamycin"/>
</dbReference>
<dbReference type="DrugBank" id="DB12339">
    <property type="generic name" value="Radezolid"/>
</dbReference>
<dbReference type="PaxDb" id="1280-SAXN108_0592"/>
<dbReference type="GeneID" id="3920373"/>
<dbReference type="GeneID" id="98344872"/>
<dbReference type="KEGG" id="sao:SAOUHSC_00519"/>
<dbReference type="PATRIC" id="fig|93061.5.peg.466"/>
<dbReference type="eggNOG" id="COG0081">
    <property type="taxonomic scope" value="Bacteria"/>
</dbReference>
<dbReference type="HOGENOM" id="CLU_062853_0_0_9"/>
<dbReference type="OrthoDB" id="9803740at2"/>
<dbReference type="PRO" id="PR:Q2G0P0"/>
<dbReference type="Proteomes" id="UP000008816">
    <property type="component" value="Chromosome"/>
</dbReference>
<dbReference type="GO" id="GO:0015934">
    <property type="term" value="C:large ribosomal subunit"/>
    <property type="evidence" value="ECO:0007669"/>
    <property type="project" value="InterPro"/>
</dbReference>
<dbReference type="GO" id="GO:0019843">
    <property type="term" value="F:rRNA binding"/>
    <property type="evidence" value="ECO:0007669"/>
    <property type="project" value="UniProtKB-UniRule"/>
</dbReference>
<dbReference type="GO" id="GO:0003735">
    <property type="term" value="F:structural constituent of ribosome"/>
    <property type="evidence" value="ECO:0007669"/>
    <property type="project" value="InterPro"/>
</dbReference>
<dbReference type="GO" id="GO:0000049">
    <property type="term" value="F:tRNA binding"/>
    <property type="evidence" value="ECO:0007669"/>
    <property type="project" value="UniProtKB-KW"/>
</dbReference>
<dbReference type="GO" id="GO:0006417">
    <property type="term" value="P:regulation of translation"/>
    <property type="evidence" value="ECO:0007669"/>
    <property type="project" value="UniProtKB-KW"/>
</dbReference>
<dbReference type="GO" id="GO:0006412">
    <property type="term" value="P:translation"/>
    <property type="evidence" value="ECO:0007669"/>
    <property type="project" value="UniProtKB-UniRule"/>
</dbReference>
<dbReference type="CDD" id="cd00403">
    <property type="entry name" value="Ribosomal_L1"/>
    <property type="match status" value="1"/>
</dbReference>
<dbReference type="FunFam" id="3.40.50.790:FF:000001">
    <property type="entry name" value="50S ribosomal protein L1"/>
    <property type="match status" value="1"/>
</dbReference>
<dbReference type="Gene3D" id="3.30.190.20">
    <property type="match status" value="1"/>
</dbReference>
<dbReference type="Gene3D" id="3.40.50.790">
    <property type="match status" value="1"/>
</dbReference>
<dbReference type="HAMAP" id="MF_01318_B">
    <property type="entry name" value="Ribosomal_uL1_B"/>
    <property type="match status" value="1"/>
</dbReference>
<dbReference type="InterPro" id="IPR005878">
    <property type="entry name" value="Ribosom_uL1_bac-type"/>
</dbReference>
<dbReference type="InterPro" id="IPR002143">
    <property type="entry name" value="Ribosomal_uL1"/>
</dbReference>
<dbReference type="InterPro" id="IPR023674">
    <property type="entry name" value="Ribosomal_uL1-like"/>
</dbReference>
<dbReference type="InterPro" id="IPR028364">
    <property type="entry name" value="Ribosomal_uL1/biogenesis"/>
</dbReference>
<dbReference type="InterPro" id="IPR016095">
    <property type="entry name" value="Ribosomal_uL1_3-a/b-sand"/>
</dbReference>
<dbReference type="InterPro" id="IPR023673">
    <property type="entry name" value="Ribosomal_uL1_CS"/>
</dbReference>
<dbReference type="NCBIfam" id="TIGR01169">
    <property type="entry name" value="rplA_bact"/>
    <property type="match status" value="1"/>
</dbReference>
<dbReference type="PANTHER" id="PTHR36427">
    <property type="entry name" value="54S RIBOSOMAL PROTEIN L1, MITOCHONDRIAL"/>
    <property type="match status" value="1"/>
</dbReference>
<dbReference type="PANTHER" id="PTHR36427:SF3">
    <property type="entry name" value="LARGE RIBOSOMAL SUBUNIT PROTEIN UL1M"/>
    <property type="match status" value="1"/>
</dbReference>
<dbReference type="Pfam" id="PF00687">
    <property type="entry name" value="Ribosomal_L1"/>
    <property type="match status" value="1"/>
</dbReference>
<dbReference type="PIRSF" id="PIRSF002155">
    <property type="entry name" value="Ribosomal_L1"/>
    <property type="match status" value="1"/>
</dbReference>
<dbReference type="SUPFAM" id="SSF56808">
    <property type="entry name" value="Ribosomal protein L1"/>
    <property type="match status" value="1"/>
</dbReference>
<dbReference type="PROSITE" id="PS01199">
    <property type="entry name" value="RIBOSOMAL_L1"/>
    <property type="match status" value="1"/>
</dbReference>
<protein>
    <recommendedName>
        <fullName evidence="1">Large ribosomal subunit protein uL1</fullName>
    </recommendedName>
    <alternativeName>
        <fullName evidence="2">50S ribosomal protein L1</fullName>
    </alternativeName>
</protein>
<proteinExistence type="inferred from homology"/>
<gene>
    <name evidence="1" type="primary">rplA</name>
    <name type="ordered locus">SAOUHSC_00519</name>
</gene>
<name>RL1_STAA8</name>
<reference key="1">
    <citation type="book" date="2006" name="Gram positive pathogens, 2nd edition">
        <title>The Staphylococcus aureus NCTC 8325 genome.</title>
        <editorList>
            <person name="Fischetti V."/>
            <person name="Novick R."/>
            <person name="Ferretti J."/>
            <person name="Portnoy D."/>
            <person name="Rood J."/>
        </editorList>
        <authorList>
            <person name="Gillaspy A.F."/>
            <person name="Worrell V."/>
            <person name="Orvis J."/>
            <person name="Roe B.A."/>
            <person name="Dyer D.W."/>
            <person name="Iandolo J.J."/>
        </authorList>
    </citation>
    <scope>NUCLEOTIDE SEQUENCE [LARGE SCALE GENOMIC DNA]</scope>
    <source>
        <strain>NCTC 8325 / PS 47</strain>
    </source>
</reference>
<keyword id="KW-1185">Reference proteome</keyword>
<keyword id="KW-0678">Repressor</keyword>
<keyword id="KW-0687">Ribonucleoprotein</keyword>
<keyword id="KW-0689">Ribosomal protein</keyword>
<keyword id="KW-0694">RNA-binding</keyword>
<keyword id="KW-0699">rRNA-binding</keyword>
<keyword id="KW-0810">Translation regulation</keyword>
<keyword id="KW-0820">tRNA-binding</keyword>
<comment type="function">
    <text evidence="1">Binds directly to 23S rRNA. The L1 stalk is quite mobile in the ribosome, and is involved in E site tRNA release.</text>
</comment>
<comment type="function">
    <text evidence="1">Protein L1 is also a translational repressor protein, it controls the translation of the L11 operon by binding to its mRNA.</text>
</comment>
<comment type="subunit">
    <text evidence="1">Part of the 50S ribosomal subunit.</text>
</comment>
<comment type="similarity">
    <text evidence="1">Belongs to the universal ribosomal protein uL1 family.</text>
</comment>
<feature type="chain" id="PRO_0000308111" description="Large ribosomal subunit protein uL1">
    <location>
        <begin position="1"/>
        <end position="230"/>
    </location>
</feature>
<sequence length="230" mass="24708">MAKKGKKYQEAASKVDRTQHYSVEEAIKLAKETSIANFDASVEVAFRLGIDTRKNDQQIRGAVVLPNGTGKSQSVLVFAKGDKIAEAEAAGADYVGEAEYVQKIQQGWFDFDVVVATPDMMGEVGKLGRVLGPKGLMPNPKTGTVTMDVKKAVEEIKAGKVEYRAEKAGIVHASIGKVSFTDEQLIENFNTLQDVLAKAKPSSAKGTYFKSVAVTTTMGPGVKIDTASFK</sequence>